<accession>Q7U550</accession>
<gene>
    <name evidence="1" type="primary">ctaB</name>
    <name type="ordered locus">SYNW1859</name>
</gene>
<evidence type="ECO:0000255" key="1">
    <source>
        <dbReference type="HAMAP-Rule" id="MF_00154"/>
    </source>
</evidence>
<sequence>MAEAISAALPTRDQVVPSRKRVKLPPWLEVAKPRLIPLLLATTLGGMALTEGWPLSSPRLVCTLGGGALASAAAGVLNCLWEQDLDGRMARTSGRALPSGRLSPTSAFIGAIACTLAAAMLLVSGVNCLAAGLSLLGLCSYVLLYTALLKPRTTQNIVIGGVAGAIPPLVGAAAATGHVGLGGWWLFALVMVWTPAHFWALALLLREDYRAVGIPMLPVVKGPVVTARAIRRYGWATVLLSGFGVLALPTGGVFYGLILLPFNGRLIQMVQRLSMDPDSLMAAKGLFRWSILYLFGICLLLILSRTDLASSFDQQVMFVLQQLPIV</sequence>
<proteinExistence type="inferred from homology"/>
<organism>
    <name type="scientific">Parasynechococcus marenigrum (strain WH8102)</name>
    <dbReference type="NCBI Taxonomy" id="84588"/>
    <lineage>
        <taxon>Bacteria</taxon>
        <taxon>Bacillati</taxon>
        <taxon>Cyanobacteriota</taxon>
        <taxon>Cyanophyceae</taxon>
        <taxon>Synechococcales</taxon>
        <taxon>Prochlorococcaceae</taxon>
        <taxon>Parasynechococcus</taxon>
        <taxon>Parasynechococcus marenigrum</taxon>
    </lineage>
</organism>
<name>COXX_PARMW</name>
<protein>
    <recommendedName>
        <fullName evidence="1">Protoheme IX farnesyltransferase</fullName>
        <ecNumber evidence="1">2.5.1.141</ecNumber>
    </recommendedName>
    <alternativeName>
        <fullName evidence="1">Heme B farnesyltransferase</fullName>
    </alternativeName>
    <alternativeName>
        <fullName evidence="1">Heme O synthase</fullName>
    </alternativeName>
</protein>
<comment type="function">
    <text evidence="1">Converts heme B (protoheme IX) to heme O by substitution of the vinyl group on carbon 2 of heme B porphyrin ring with a hydroxyethyl farnesyl side group.</text>
</comment>
<comment type="catalytic activity">
    <reaction evidence="1">
        <text>heme b + (2E,6E)-farnesyl diphosphate + H2O = Fe(II)-heme o + diphosphate</text>
        <dbReference type="Rhea" id="RHEA:28070"/>
        <dbReference type="ChEBI" id="CHEBI:15377"/>
        <dbReference type="ChEBI" id="CHEBI:33019"/>
        <dbReference type="ChEBI" id="CHEBI:60344"/>
        <dbReference type="ChEBI" id="CHEBI:60530"/>
        <dbReference type="ChEBI" id="CHEBI:175763"/>
        <dbReference type="EC" id="2.5.1.141"/>
    </reaction>
</comment>
<comment type="pathway">
    <text evidence="1">Porphyrin-containing compound metabolism; heme O biosynthesis; heme O from protoheme: step 1/1.</text>
</comment>
<comment type="subcellular location">
    <subcellularLocation>
        <location evidence="1">Cell inner membrane</location>
        <topology evidence="1">Multi-pass membrane protein</topology>
    </subcellularLocation>
</comment>
<comment type="miscellaneous">
    <text evidence="1">Carbon 2 of the heme B porphyrin ring is defined according to the Fischer nomenclature.</text>
</comment>
<comment type="similarity">
    <text evidence="1">Belongs to the UbiA prenyltransferase family. Protoheme IX farnesyltransferase subfamily.</text>
</comment>
<dbReference type="EC" id="2.5.1.141" evidence="1"/>
<dbReference type="EMBL" id="BX569694">
    <property type="protein sequence ID" value="CAE08374.1"/>
    <property type="molecule type" value="Genomic_DNA"/>
</dbReference>
<dbReference type="RefSeq" id="WP_011128717.1">
    <property type="nucleotide sequence ID" value="NC_005070.1"/>
</dbReference>
<dbReference type="SMR" id="Q7U550"/>
<dbReference type="STRING" id="84588.SYNW1859"/>
<dbReference type="KEGG" id="syw:SYNW1859"/>
<dbReference type="eggNOG" id="COG0109">
    <property type="taxonomic scope" value="Bacteria"/>
</dbReference>
<dbReference type="HOGENOM" id="CLU_029631_0_2_3"/>
<dbReference type="UniPathway" id="UPA00834">
    <property type="reaction ID" value="UER00712"/>
</dbReference>
<dbReference type="Proteomes" id="UP000001422">
    <property type="component" value="Chromosome"/>
</dbReference>
<dbReference type="GO" id="GO:0005886">
    <property type="term" value="C:plasma membrane"/>
    <property type="evidence" value="ECO:0007669"/>
    <property type="project" value="UniProtKB-SubCell"/>
</dbReference>
<dbReference type="GO" id="GO:0008495">
    <property type="term" value="F:protoheme IX farnesyltransferase activity"/>
    <property type="evidence" value="ECO:0007669"/>
    <property type="project" value="UniProtKB-UniRule"/>
</dbReference>
<dbReference type="GO" id="GO:0048034">
    <property type="term" value="P:heme O biosynthetic process"/>
    <property type="evidence" value="ECO:0007669"/>
    <property type="project" value="UniProtKB-UniRule"/>
</dbReference>
<dbReference type="CDD" id="cd13957">
    <property type="entry name" value="PT_UbiA_Cox10"/>
    <property type="match status" value="1"/>
</dbReference>
<dbReference type="Gene3D" id="1.10.357.140">
    <property type="entry name" value="UbiA prenyltransferase"/>
    <property type="match status" value="1"/>
</dbReference>
<dbReference type="HAMAP" id="MF_00154">
    <property type="entry name" value="CyoE_CtaB"/>
    <property type="match status" value="1"/>
</dbReference>
<dbReference type="InterPro" id="IPR006369">
    <property type="entry name" value="Protohaem_IX_farnesylTrfase"/>
</dbReference>
<dbReference type="InterPro" id="IPR000537">
    <property type="entry name" value="UbiA_prenyltransferase"/>
</dbReference>
<dbReference type="InterPro" id="IPR030470">
    <property type="entry name" value="UbiA_prenylTrfase_CS"/>
</dbReference>
<dbReference type="InterPro" id="IPR044878">
    <property type="entry name" value="UbiA_sf"/>
</dbReference>
<dbReference type="NCBIfam" id="TIGR01473">
    <property type="entry name" value="cyoE_ctaB"/>
    <property type="match status" value="1"/>
</dbReference>
<dbReference type="NCBIfam" id="NF003349">
    <property type="entry name" value="PRK04375.1-2"/>
    <property type="match status" value="1"/>
</dbReference>
<dbReference type="PANTHER" id="PTHR43448:SF7">
    <property type="entry name" value="4-HYDROXYBENZOATE SOLANESYLTRANSFERASE"/>
    <property type="match status" value="1"/>
</dbReference>
<dbReference type="PANTHER" id="PTHR43448">
    <property type="entry name" value="PROTOHEME IX FARNESYLTRANSFERASE, MITOCHONDRIAL"/>
    <property type="match status" value="1"/>
</dbReference>
<dbReference type="Pfam" id="PF01040">
    <property type="entry name" value="UbiA"/>
    <property type="match status" value="1"/>
</dbReference>
<dbReference type="PROSITE" id="PS00943">
    <property type="entry name" value="UBIA"/>
    <property type="match status" value="1"/>
</dbReference>
<feature type="chain" id="PRO_0000327181" description="Protoheme IX farnesyltransferase">
    <location>
        <begin position="1"/>
        <end position="326"/>
    </location>
</feature>
<feature type="transmembrane region" description="Helical" evidence="1">
    <location>
        <begin position="35"/>
        <end position="55"/>
    </location>
</feature>
<feature type="transmembrane region" description="Helical" evidence="1">
    <location>
        <begin position="60"/>
        <end position="80"/>
    </location>
</feature>
<feature type="transmembrane region" description="Helical" evidence="1">
    <location>
        <begin position="106"/>
        <end position="126"/>
    </location>
</feature>
<feature type="transmembrane region" description="Helical" evidence="1">
    <location>
        <begin position="129"/>
        <end position="149"/>
    </location>
</feature>
<feature type="transmembrane region" description="Helical" evidence="1">
    <location>
        <begin position="157"/>
        <end position="177"/>
    </location>
</feature>
<feature type="transmembrane region" description="Helical" evidence="1">
    <location>
        <begin position="185"/>
        <end position="205"/>
    </location>
</feature>
<feature type="transmembrane region" description="Helical" evidence="1">
    <location>
        <begin position="242"/>
        <end position="262"/>
    </location>
</feature>
<feature type="transmembrane region" description="Helical" evidence="1">
    <location>
        <begin position="283"/>
        <end position="303"/>
    </location>
</feature>
<reference key="1">
    <citation type="journal article" date="2003" name="Nature">
        <title>The genome of a motile marine Synechococcus.</title>
        <authorList>
            <person name="Palenik B."/>
            <person name="Brahamsha B."/>
            <person name="Larimer F.W."/>
            <person name="Land M.L."/>
            <person name="Hauser L."/>
            <person name="Chain P."/>
            <person name="Lamerdin J.E."/>
            <person name="Regala W."/>
            <person name="Allen E.E."/>
            <person name="McCarren J."/>
            <person name="Paulsen I.T."/>
            <person name="Dufresne A."/>
            <person name="Partensky F."/>
            <person name="Webb E.A."/>
            <person name="Waterbury J."/>
        </authorList>
    </citation>
    <scope>NUCLEOTIDE SEQUENCE [LARGE SCALE GENOMIC DNA]</scope>
    <source>
        <strain>WH8102</strain>
    </source>
</reference>
<keyword id="KW-0997">Cell inner membrane</keyword>
<keyword id="KW-1003">Cell membrane</keyword>
<keyword id="KW-0350">Heme biosynthesis</keyword>
<keyword id="KW-0472">Membrane</keyword>
<keyword id="KW-0808">Transferase</keyword>
<keyword id="KW-0812">Transmembrane</keyword>
<keyword id="KW-1133">Transmembrane helix</keyword>